<comment type="subcellular location">
    <subcellularLocation>
        <location>Secreted</location>
    </subcellularLocation>
</comment>
<comment type="domain">
    <text>Avian ovomucoid consists of three homologous, tandem Kazal family inhibitory domains.</text>
</comment>
<name>IOVO_SYRMI</name>
<organism>
    <name type="scientific">Syrmaticus mikado</name>
    <name type="common">Mikado pheasant</name>
    <name type="synonym">Calophasis mikado</name>
    <dbReference type="NCBI Taxonomy" id="9065"/>
    <lineage>
        <taxon>Eukaryota</taxon>
        <taxon>Metazoa</taxon>
        <taxon>Chordata</taxon>
        <taxon>Craniata</taxon>
        <taxon>Vertebrata</taxon>
        <taxon>Euteleostomi</taxon>
        <taxon>Archelosauria</taxon>
        <taxon>Archosauria</taxon>
        <taxon>Dinosauria</taxon>
        <taxon>Saurischia</taxon>
        <taxon>Theropoda</taxon>
        <taxon>Coelurosauria</taxon>
        <taxon>Aves</taxon>
        <taxon>Neognathae</taxon>
        <taxon>Galloanserae</taxon>
        <taxon>Galliformes</taxon>
        <taxon>Phasianidae</taxon>
        <taxon>Phasianinae</taxon>
        <taxon>Syrmaticus</taxon>
    </lineage>
</organism>
<sequence length="54" mass="5874">AVSVDCSEYPKPACTMEYRPLCGSDNKTYGNKCNFCNAVVESNGTLTLSRFGKC</sequence>
<evidence type="ECO:0000255" key="1">
    <source>
        <dbReference type="PROSITE-ProRule" id="PRU00798"/>
    </source>
</evidence>
<feature type="chain" id="PRO_0000073182" description="Ovomucoid">
    <location>
        <begin position="1" status="less than"/>
        <end position="54" status="greater than"/>
    </location>
</feature>
<feature type="domain" description="Kazal-like" evidence="1">
    <location>
        <begin position="4"/>
        <end position="54"/>
    </location>
</feature>
<feature type="site" description="Reactive bond 3">
    <location>
        <begin position="16"/>
        <end position="17"/>
    </location>
</feature>
<feature type="glycosylation site" description="N-linked (GlcNAc...) asparagine">
    <location>
        <position position="43"/>
    </location>
</feature>
<feature type="disulfide bond">
    <location>
        <begin position="6"/>
        <end position="36"/>
    </location>
</feature>
<feature type="disulfide bond">
    <location>
        <begin position="14"/>
        <end position="33"/>
    </location>
</feature>
<feature type="disulfide bond">
    <location>
        <begin position="22"/>
        <end position="54"/>
    </location>
</feature>
<feature type="non-terminal residue">
    <location>
        <position position="1"/>
    </location>
</feature>
<feature type="non-terminal residue">
    <location>
        <position position="54"/>
    </location>
</feature>
<keyword id="KW-0903">Direct protein sequencing</keyword>
<keyword id="KW-1015">Disulfide bond</keyword>
<keyword id="KW-0325">Glycoprotein</keyword>
<keyword id="KW-0646">Protease inhibitor</keyword>
<keyword id="KW-0677">Repeat</keyword>
<keyword id="KW-0964">Secreted</keyword>
<keyword id="KW-0722">Serine protease inhibitor</keyword>
<protein>
    <recommendedName>
        <fullName>Ovomucoid</fullName>
    </recommendedName>
</protein>
<accession>P52269</accession>
<dbReference type="PIR" id="H61493">
    <property type="entry name" value="H61493"/>
</dbReference>
<dbReference type="SMR" id="P52269"/>
<dbReference type="GO" id="GO:0005615">
    <property type="term" value="C:extracellular space"/>
    <property type="evidence" value="ECO:0007669"/>
    <property type="project" value="UniProtKB-ARBA"/>
</dbReference>
<dbReference type="GO" id="GO:0004867">
    <property type="term" value="F:serine-type endopeptidase inhibitor activity"/>
    <property type="evidence" value="ECO:0007669"/>
    <property type="project" value="UniProtKB-KW"/>
</dbReference>
<dbReference type="CDD" id="cd00104">
    <property type="entry name" value="KAZAL_FS"/>
    <property type="match status" value="1"/>
</dbReference>
<dbReference type="FunFam" id="3.30.60.30:FF:000037">
    <property type="entry name" value="Ovomucoid"/>
    <property type="match status" value="1"/>
</dbReference>
<dbReference type="Gene3D" id="3.30.60.30">
    <property type="match status" value="1"/>
</dbReference>
<dbReference type="InterPro" id="IPR051597">
    <property type="entry name" value="Bifunctional_prot_inhibitor"/>
</dbReference>
<dbReference type="InterPro" id="IPR002350">
    <property type="entry name" value="Kazal_dom"/>
</dbReference>
<dbReference type="InterPro" id="IPR036058">
    <property type="entry name" value="Kazal_dom_sf"/>
</dbReference>
<dbReference type="InterPro" id="IPR001239">
    <property type="entry name" value="Prot_inh_Kazal-m"/>
</dbReference>
<dbReference type="PANTHER" id="PTHR47729:SF1">
    <property type="entry name" value="OVOMUCOID-LIKE-RELATED"/>
    <property type="match status" value="1"/>
</dbReference>
<dbReference type="PANTHER" id="PTHR47729">
    <property type="entry name" value="SERINE PEPTIDASE INHIBITOR, KAZAL TYPE 2, TANDEM DUPLICATE 1-RELATED"/>
    <property type="match status" value="1"/>
</dbReference>
<dbReference type="Pfam" id="PF00050">
    <property type="entry name" value="Kazal_1"/>
    <property type="match status" value="1"/>
</dbReference>
<dbReference type="PRINTS" id="PR00290">
    <property type="entry name" value="KAZALINHBTR"/>
</dbReference>
<dbReference type="SMART" id="SM00280">
    <property type="entry name" value="KAZAL"/>
    <property type="match status" value="1"/>
</dbReference>
<dbReference type="SUPFAM" id="SSF100895">
    <property type="entry name" value="Kazal-type serine protease inhibitors"/>
    <property type="match status" value="1"/>
</dbReference>
<dbReference type="PROSITE" id="PS00282">
    <property type="entry name" value="KAZAL_1"/>
    <property type="match status" value="1"/>
</dbReference>
<dbReference type="PROSITE" id="PS51465">
    <property type="entry name" value="KAZAL_2"/>
    <property type="match status" value="1"/>
</dbReference>
<proteinExistence type="evidence at protein level"/>
<reference key="1">
    <citation type="journal article" date="1990" name="J. Protein Chem.">
        <title>Amino acid sequences of ovomucoid third domain from 25 additional species of birds.</title>
        <authorList>
            <person name="Laskowski M. Jr."/>
            <person name="Apostol I."/>
            <person name="Ardelt W."/>
            <person name="Cook J."/>
            <person name="Giletto A."/>
            <person name="Kelly C.A."/>
            <person name="Lu W."/>
            <person name="Park S.J."/>
            <person name="Qasim M.A."/>
            <person name="Whatley H.E."/>
            <person name="Wieczorek A."/>
            <person name="Wynn R."/>
        </authorList>
    </citation>
    <scope>PROTEIN SEQUENCE</scope>
</reference>